<organism>
    <name type="scientific">Borreliella afzelii (strain PKo)</name>
    <name type="common">Borrelia afzelii</name>
    <dbReference type="NCBI Taxonomy" id="390236"/>
    <lineage>
        <taxon>Bacteria</taxon>
        <taxon>Pseudomonadati</taxon>
        <taxon>Spirochaetota</taxon>
        <taxon>Spirochaetia</taxon>
        <taxon>Spirochaetales</taxon>
        <taxon>Borreliaceae</taxon>
        <taxon>Borreliella</taxon>
    </lineage>
</organism>
<proteinExistence type="inferred from homology"/>
<evidence type="ECO:0000255" key="1">
    <source>
        <dbReference type="HAMAP-Rule" id="MF_00534"/>
    </source>
</evidence>
<feature type="chain" id="PRO_1000051382" description="Asparagine--tRNA ligase">
    <location>
        <begin position="1"/>
        <end position="462"/>
    </location>
</feature>
<accession>Q0SP63</accession>
<accession>G0IQU6</accession>
<keyword id="KW-0030">Aminoacyl-tRNA synthetase</keyword>
<keyword id="KW-0067">ATP-binding</keyword>
<keyword id="KW-0963">Cytoplasm</keyword>
<keyword id="KW-0436">Ligase</keyword>
<keyword id="KW-0547">Nucleotide-binding</keyword>
<keyword id="KW-0648">Protein biosynthesis</keyword>
<reference key="1">
    <citation type="journal article" date="2006" name="BMC Genomics">
        <title>Comparative genome analysis: selection pressure on the Borrelia vls cassettes is essential for infectivity.</title>
        <authorList>
            <person name="Gloeckner G."/>
            <person name="Schulte-Spechtel U."/>
            <person name="Schilhabel M."/>
            <person name="Felder M."/>
            <person name="Suehnel J."/>
            <person name="Wilske B."/>
            <person name="Platzer M."/>
        </authorList>
    </citation>
    <scope>NUCLEOTIDE SEQUENCE [LARGE SCALE GENOMIC DNA]</scope>
    <source>
        <strain>PKo</strain>
    </source>
</reference>
<reference key="2">
    <citation type="journal article" date="2011" name="J. Bacteriol.">
        <title>Whole-genome sequences of two Borrelia afzelii and two Borrelia garinii Lyme disease agent isolates.</title>
        <authorList>
            <person name="Casjens S.R."/>
            <person name="Mongodin E.F."/>
            <person name="Qiu W.G."/>
            <person name="Dunn J.J."/>
            <person name="Luft B.J."/>
            <person name="Fraser-Liggett C.M."/>
            <person name="Schutzer S.E."/>
        </authorList>
    </citation>
    <scope>NUCLEOTIDE SEQUENCE [LARGE SCALE GENOMIC DNA]</scope>
    <source>
        <strain>PKo</strain>
    </source>
</reference>
<comment type="catalytic activity">
    <reaction evidence="1">
        <text>tRNA(Asn) + L-asparagine + ATP = L-asparaginyl-tRNA(Asn) + AMP + diphosphate + H(+)</text>
        <dbReference type="Rhea" id="RHEA:11180"/>
        <dbReference type="Rhea" id="RHEA-COMP:9659"/>
        <dbReference type="Rhea" id="RHEA-COMP:9674"/>
        <dbReference type="ChEBI" id="CHEBI:15378"/>
        <dbReference type="ChEBI" id="CHEBI:30616"/>
        <dbReference type="ChEBI" id="CHEBI:33019"/>
        <dbReference type="ChEBI" id="CHEBI:58048"/>
        <dbReference type="ChEBI" id="CHEBI:78442"/>
        <dbReference type="ChEBI" id="CHEBI:78515"/>
        <dbReference type="ChEBI" id="CHEBI:456215"/>
        <dbReference type="EC" id="6.1.1.22"/>
    </reaction>
</comment>
<comment type="subunit">
    <text evidence="1">Homodimer.</text>
</comment>
<comment type="subcellular location">
    <subcellularLocation>
        <location evidence="1">Cytoplasm</location>
    </subcellularLocation>
</comment>
<comment type="similarity">
    <text evidence="1">Belongs to the class-II aminoacyl-tRNA synthetase family.</text>
</comment>
<gene>
    <name evidence="1" type="primary">asnS</name>
    <name type="ordered locus">BAPKO_0102</name>
    <name type="ordered locus">BafPKo_0099</name>
</gene>
<protein>
    <recommendedName>
        <fullName evidence="1">Asparagine--tRNA ligase</fullName>
        <ecNumber evidence="1">6.1.1.22</ecNumber>
    </recommendedName>
    <alternativeName>
        <fullName evidence="1">Asparaginyl-tRNA synthetase</fullName>
        <shortName evidence="1">AsnRS</shortName>
    </alternativeName>
</protein>
<sequence>MFASIKDILENPILNSNVTINGWIRTKRSNGKIGFIEINDGSTLKGIQAVINEEENQFDEKDLKNLTTGASISLTGLLVESPAKGQNYEIKTCGFNVIGEADPKTYPLQKKRHTFEFLREIPHLRIRTNTFGAVARVRSKISYKIHEYFQKNGFFYINTPIITSNDGEGAGEMFRVSTLKFNKPNNDLGNIDFKDDFFGKEAFLSVTGQLHGEAYAMALSKIYTFGPTFRAENSNTTRHASEFWMIEPEMAFYKLNDNITLAEDLLKYLLSSILNECSQDMDFLENYIEKGLIKKLENVINSNFEVITYTKAIEILESSKKNFEIKPYWGIDLQTEHERFLTEETFKKPVVVIDYPKNFKAFYMKINKDNKTVKGMDVLVPKIGEIIGGSEREDNLQKLENRIKELNLSIEHLNWYLDLRRFGSTPHSGFGLGLERFVQYSTGISNIRDSIPFPRTPKNLYF</sequence>
<dbReference type="EC" id="6.1.1.22" evidence="1"/>
<dbReference type="EMBL" id="CP000395">
    <property type="protein sequence ID" value="ABH01365.1"/>
    <property type="molecule type" value="Genomic_DNA"/>
</dbReference>
<dbReference type="EMBL" id="CP002933">
    <property type="protein sequence ID" value="AEL69332.1"/>
    <property type="molecule type" value="Genomic_DNA"/>
</dbReference>
<dbReference type="RefSeq" id="WP_011600835.1">
    <property type="nucleotide sequence ID" value="NC_008277.1"/>
</dbReference>
<dbReference type="SMR" id="Q0SP63"/>
<dbReference type="STRING" id="29518.BLA32_03785"/>
<dbReference type="KEGG" id="baf:BAPKO_0102"/>
<dbReference type="KEGG" id="bafz:BafPKo_0099"/>
<dbReference type="PATRIC" id="fig|390236.22.peg.98"/>
<dbReference type="eggNOG" id="COG0017">
    <property type="taxonomic scope" value="Bacteria"/>
</dbReference>
<dbReference type="HOGENOM" id="CLU_004553_2_0_12"/>
<dbReference type="OrthoDB" id="9762036at2"/>
<dbReference type="Proteomes" id="UP000005216">
    <property type="component" value="Chromosome"/>
</dbReference>
<dbReference type="GO" id="GO:0005737">
    <property type="term" value="C:cytoplasm"/>
    <property type="evidence" value="ECO:0007669"/>
    <property type="project" value="UniProtKB-SubCell"/>
</dbReference>
<dbReference type="GO" id="GO:0004816">
    <property type="term" value="F:asparagine-tRNA ligase activity"/>
    <property type="evidence" value="ECO:0007669"/>
    <property type="project" value="UniProtKB-UniRule"/>
</dbReference>
<dbReference type="GO" id="GO:0005524">
    <property type="term" value="F:ATP binding"/>
    <property type="evidence" value="ECO:0007669"/>
    <property type="project" value="UniProtKB-UniRule"/>
</dbReference>
<dbReference type="GO" id="GO:0003676">
    <property type="term" value="F:nucleic acid binding"/>
    <property type="evidence" value="ECO:0007669"/>
    <property type="project" value="InterPro"/>
</dbReference>
<dbReference type="GO" id="GO:0006421">
    <property type="term" value="P:asparaginyl-tRNA aminoacylation"/>
    <property type="evidence" value="ECO:0007669"/>
    <property type="project" value="UniProtKB-UniRule"/>
</dbReference>
<dbReference type="CDD" id="cd00776">
    <property type="entry name" value="AsxRS_core"/>
    <property type="match status" value="1"/>
</dbReference>
<dbReference type="CDD" id="cd04318">
    <property type="entry name" value="EcAsnRS_like_N"/>
    <property type="match status" value="1"/>
</dbReference>
<dbReference type="FunFam" id="3.30.930.10:FF:000016">
    <property type="entry name" value="Asparagine--tRNA ligase"/>
    <property type="match status" value="1"/>
</dbReference>
<dbReference type="Gene3D" id="3.30.930.10">
    <property type="entry name" value="Bira Bifunctional Protein, Domain 2"/>
    <property type="match status" value="1"/>
</dbReference>
<dbReference type="Gene3D" id="2.40.50.140">
    <property type="entry name" value="Nucleic acid-binding proteins"/>
    <property type="match status" value="1"/>
</dbReference>
<dbReference type="HAMAP" id="MF_00534">
    <property type="entry name" value="Asn_tRNA_synth"/>
    <property type="match status" value="1"/>
</dbReference>
<dbReference type="InterPro" id="IPR004364">
    <property type="entry name" value="Aa-tRNA-synt_II"/>
</dbReference>
<dbReference type="InterPro" id="IPR006195">
    <property type="entry name" value="aa-tRNA-synth_II"/>
</dbReference>
<dbReference type="InterPro" id="IPR045864">
    <property type="entry name" value="aa-tRNA-synth_II/BPL/LPL"/>
</dbReference>
<dbReference type="InterPro" id="IPR004522">
    <property type="entry name" value="Asn-tRNA-ligase"/>
</dbReference>
<dbReference type="InterPro" id="IPR002312">
    <property type="entry name" value="Asp/Asn-tRNA-synth_IIb"/>
</dbReference>
<dbReference type="InterPro" id="IPR012340">
    <property type="entry name" value="NA-bd_OB-fold"/>
</dbReference>
<dbReference type="InterPro" id="IPR004365">
    <property type="entry name" value="NA-bd_OB_tRNA"/>
</dbReference>
<dbReference type="NCBIfam" id="TIGR00457">
    <property type="entry name" value="asnS"/>
    <property type="match status" value="1"/>
</dbReference>
<dbReference type="NCBIfam" id="NF003037">
    <property type="entry name" value="PRK03932.1"/>
    <property type="match status" value="1"/>
</dbReference>
<dbReference type="PANTHER" id="PTHR22594:SF34">
    <property type="entry name" value="ASPARAGINE--TRNA LIGASE, MITOCHONDRIAL-RELATED"/>
    <property type="match status" value="1"/>
</dbReference>
<dbReference type="PANTHER" id="PTHR22594">
    <property type="entry name" value="ASPARTYL/LYSYL-TRNA SYNTHETASE"/>
    <property type="match status" value="1"/>
</dbReference>
<dbReference type="Pfam" id="PF00152">
    <property type="entry name" value="tRNA-synt_2"/>
    <property type="match status" value="1"/>
</dbReference>
<dbReference type="Pfam" id="PF01336">
    <property type="entry name" value="tRNA_anti-codon"/>
    <property type="match status" value="1"/>
</dbReference>
<dbReference type="PRINTS" id="PR01042">
    <property type="entry name" value="TRNASYNTHASP"/>
</dbReference>
<dbReference type="SUPFAM" id="SSF55681">
    <property type="entry name" value="Class II aaRS and biotin synthetases"/>
    <property type="match status" value="1"/>
</dbReference>
<dbReference type="SUPFAM" id="SSF50249">
    <property type="entry name" value="Nucleic acid-binding proteins"/>
    <property type="match status" value="1"/>
</dbReference>
<dbReference type="PROSITE" id="PS50862">
    <property type="entry name" value="AA_TRNA_LIGASE_II"/>
    <property type="match status" value="1"/>
</dbReference>
<name>SYN_BORAP</name>